<comment type="function">
    <text evidence="1">One of the primary rRNA binding proteins. Required for association of the 30S and 50S subunits to form the 70S ribosome, for tRNA binding and peptide bond formation. It has been suggested to have peptidyltransferase activity; this is somewhat controversial. Makes several contacts with the 16S rRNA in the 70S ribosome.</text>
</comment>
<comment type="subunit">
    <text evidence="1">Part of the 50S ribosomal subunit. Forms a bridge to the 30S subunit in the 70S ribosome.</text>
</comment>
<comment type="similarity">
    <text evidence="1">Belongs to the universal ribosomal protein uL2 family.</text>
</comment>
<protein>
    <recommendedName>
        <fullName evidence="1">Large ribosomal subunit protein uL2</fullName>
    </recommendedName>
    <alternativeName>
        <fullName evidence="3">50S ribosomal protein L2</fullName>
    </alternativeName>
</protein>
<sequence length="238" mass="25060">MGKKLLQQRAGRGGINFRSPSWRRVGKAKIPNIEGEHIGKVIDIVHNPGTNAPLALIKLDDGTKFYVPSVQGLVVGQKIQIGKNAAISNGNIVEVGNVPEGTIISNIEKTRGDGGKFARSAGTYGVVVGKTGDKVLVKLSSEKIAQVSSNARAIVGVVAGGGVTEKPLLKAGNNYWKYKVKAKKWPHVRGVAMNAVSHPHGGGLHQSVSRPSTVSRNAPPGRKVGHIAARRTGRKEGA</sequence>
<name>RL2_SULTO</name>
<dbReference type="EMBL" id="BA000023">
    <property type="protein sequence ID" value="BAK54277.1"/>
    <property type="molecule type" value="Genomic_DNA"/>
</dbReference>
<dbReference type="RefSeq" id="WP_010978399.1">
    <property type="nucleotide sequence ID" value="NC_003106.2"/>
</dbReference>
<dbReference type="SMR" id="Q975I4"/>
<dbReference type="STRING" id="273063.STK_04270"/>
<dbReference type="KEGG" id="sto:STK_04270"/>
<dbReference type="PATRIC" id="fig|273063.9.peg.497"/>
<dbReference type="eggNOG" id="arCOG04067">
    <property type="taxonomic scope" value="Archaea"/>
</dbReference>
<dbReference type="OrthoDB" id="5987at2157"/>
<dbReference type="Proteomes" id="UP000001015">
    <property type="component" value="Chromosome"/>
</dbReference>
<dbReference type="GO" id="GO:0022625">
    <property type="term" value="C:cytosolic large ribosomal subunit"/>
    <property type="evidence" value="ECO:0007669"/>
    <property type="project" value="TreeGrafter"/>
</dbReference>
<dbReference type="GO" id="GO:0019843">
    <property type="term" value="F:rRNA binding"/>
    <property type="evidence" value="ECO:0007669"/>
    <property type="project" value="UniProtKB-UniRule"/>
</dbReference>
<dbReference type="GO" id="GO:0003735">
    <property type="term" value="F:structural constituent of ribosome"/>
    <property type="evidence" value="ECO:0007669"/>
    <property type="project" value="InterPro"/>
</dbReference>
<dbReference type="GO" id="GO:0002181">
    <property type="term" value="P:cytoplasmic translation"/>
    <property type="evidence" value="ECO:0007669"/>
    <property type="project" value="TreeGrafter"/>
</dbReference>
<dbReference type="FunFam" id="4.10.950.10:FF:000002">
    <property type="entry name" value="60S ribosomal protein L2"/>
    <property type="match status" value="1"/>
</dbReference>
<dbReference type="Gene3D" id="2.30.30.30">
    <property type="match status" value="1"/>
</dbReference>
<dbReference type="Gene3D" id="2.40.50.140">
    <property type="entry name" value="Nucleic acid-binding proteins"/>
    <property type="match status" value="1"/>
</dbReference>
<dbReference type="Gene3D" id="4.10.950.10">
    <property type="entry name" value="Ribosomal protein L2, domain 3"/>
    <property type="match status" value="1"/>
</dbReference>
<dbReference type="HAMAP" id="MF_01320_A">
    <property type="entry name" value="Ribosomal_uL2_A"/>
    <property type="match status" value="1"/>
</dbReference>
<dbReference type="InterPro" id="IPR012340">
    <property type="entry name" value="NA-bd_OB-fold"/>
</dbReference>
<dbReference type="InterPro" id="IPR014722">
    <property type="entry name" value="Rib_uL2_dom2"/>
</dbReference>
<dbReference type="InterPro" id="IPR002171">
    <property type="entry name" value="Ribosomal_uL2"/>
</dbReference>
<dbReference type="InterPro" id="IPR023672">
    <property type="entry name" value="Ribosomal_uL2_arc_euk"/>
</dbReference>
<dbReference type="InterPro" id="IPR022669">
    <property type="entry name" value="Ribosomal_uL2_C"/>
</dbReference>
<dbReference type="InterPro" id="IPR014726">
    <property type="entry name" value="Ribosomal_uL2_dom3"/>
</dbReference>
<dbReference type="InterPro" id="IPR022666">
    <property type="entry name" value="Ribosomal_uL2_RNA-bd_dom"/>
</dbReference>
<dbReference type="InterPro" id="IPR008991">
    <property type="entry name" value="Translation_prot_SH3-like_sf"/>
</dbReference>
<dbReference type="NCBIfam" id="NF007180">
    <property type="entry name" value="PRK09612.1"/>
    <property type="match status" value="1"/>
</dbReference>
<dbReference type="PANTHER" id="PTHR13691:SF16">
    <property type="entry name" value="LARGE RIBOSOMAL SUBUNIT PROTEIN UL2"/>
    <property type="match status" value="1"/>
</dbReference>
<dbReference type="PANTHER" id="PTHR13691">
    <property type="entry name" value="RIBOSOMAL PROTEIN L2"/>
    <property type="match status" value="1"/>
</dbReference>
<dbReference type="Pfam" id="PF00181">
    <property type="entry name" value="Ribosomal_L2"/>
    <property type="match status" value="1"/>
</dbReference>
<dbReference type="Pfam" id="PF03947">
    <property type="entry name" value="Ribosomal_L2_C"/>
    <property type="match status" value="1"/>
</dbReference>
<dbReference type="PIRSF" id="PIRSF002158">
    <property type="entry name" value="Ribosomal_L2"/>
    <property type="match status" value="1"/>
</dbReference>
<dbReference type="SMART" id="SM01383">
    <property type="entry name" value="Ribosomal_L2"/>
    <property type="match status" value="1"/>
</dbReference>
<dbReference type="SMART" id="SM01382">
    <property type="entry name" value="Ribosomal_L2_C"/>
    <property type="match status" value="1"/>
</dbReference>
<dbReference type="SUPFAM" id="SSF50249">
    <property type="entry name" value="Nucleic acid-binding proteins"/>
    <property type="match status" value="1"/>
</dbReference>
<dbReference type="SUPFAM" id="SSF50104">
    <property type="entry name" value="Translation proteins SH3-like domain"/>
    <property type="match status" value="1"/>
</dbReference>
<organism>
    <name type="scientific">Sulfurisphaera tokodaii (strain DSM 16993 / JCM 10545 / NBRC 100140 / 7)</name>
    <name type="common">Sulfolobus tokodaii</name>
    <dbReference type="NCBI Taxonomy" id="273063"/>
    <lineage>
        <taxon>Archaea</taxon>
        <taxon>Thermoproteota</taxon>
        <taxon>Thermoprotei</taxon>
        <taxon>Sulfolobales</taxon>
        <taxon>Sulfolobaceae</taxon>
        <taxon>Sulfurisphaera</taxon>
    </lineage>
</organism>
<reference key="1">
    <citation type="journal article" date="2001" name="DNA Res.">
        <title>Complete genome sequence of an aerobic thermoacidophilic Crenarchaeon, Sulfolobus tokodaii strain7.</title>
        <authorList>
            <person name="Kawarabayasi Y."/>
            <person name="Hino Y."/>
            <person name="Horikawa H."/>
            <person name="Jin-no K."/>
            <person name="Takahashi M."/>
            <person name="Sekine M."/>
            <person name="Baba S."/>
            <person name="Ankai A."/>
            <person name="Kosugi H."/>
            <person name="Hosoyama A."/>
            <person name="Fukui S."/>
            <person name="Nagai Y."/>
            <person name="Nishijima K."/>
            <person name="Otsuka R."/>
            <person name="Nakazawa H."/>
            <person name="Takamiya M."/>
            <person name="Kato Y."/>
            <person name="Yoshizawa T."/>
            <person name="Tanaka T."/>
            <person name="Kudoh Y."/>
            <person name="Yamazaki J."/>
            <person name="Kushida N."/>
            <person name="Oguchi A."/>
            <person name="Aoki K."/>
            <person name="Masuda S."/>
            <person name="Yanagii M."/>
            <person name="Nishimura M."/>
            <person name="Yamagishi A."/>
            <person name="Oshima T."/>
            <person name="Kikuchi H."/>
        </authorList>
    </citation>
    <scope>NUCLEOTIDE SEQUENCE [LARGE SCALE GENOMIC DNA]</scope>
    <source>
        <strain>DSM 16993 / JCM 10545 / NBRC 100140 / 7</strain>
    </source>
</reference>
<evidence type="ECO:0000255" key="1">
    <source>
        <dbReference type="HAMAP-Rule" id="MF_01320"/>
    </source>
</evidence>
<evidence type="ECO:0000256" key="2">
    <source>
        <dbReference type="SAM" id="MobiDB-lite"/>
    </source>
</evidence>
<evidence type="ECO:0000305" key="3"/>
<gene>
    <name evidence="1" type="primary">rpl2</name>
    <name type="ordered locus">STK_04270</name>
</gene>
<keyword id="KW-1185">Reference proteome</keyword>
<keyword id="KW-0687">Ribonucleoprotein</keyword>
<keyword id="KW-0689">Ribosomal protein</keyword>
<keyword id="KW-0694">RNA-binding</keyword>
<keyword id="KW-0699">rRNA-binding</keyword>
<feature type="chain" id="PRO_0000129728" description="Large ribosomal subunit protein uL2">
    <location>
        <begin position="1"/>
        <end position="238"/>
    </location>
</feature>
<feature type="region of interest" description="Disordered" evidence="2">
    <location>
        <begin position="199"/>
        <end position="238"/>
    </location>
</feature>
<feature type="compositionally biased region" description="Polar residues" evidence="2">
    <location>
        <begin position="206"/>
        <end position="216"/>
    </location>
</feature>
<feature type="compositionally biased region" description="Basic residues" evidence="2">
    <location>
        <begin position="223"/>
        <end position="238"/>
    </location>
</feature>
<accession>Q975I4</accession>
<accession>F9VMY0</accession>
<proteinExistence type="inferred from homology"/>